<keyword id="KW-1185">Reference proteome</keyword>
<keyword id="KW-0687">Ribonucleoprotein</keyword>
<keyword id="KW-0689">Ribosomal protein</keyword>
<keyword id="KW-0694">RNA-binding</keyword>
<keyword id="KW-0699">rRNA-binding</keyword>
<organism>
    <name type="scientific">Desulfotalea psychrophila (strain LSv54 / DSM 12343)</name>
    <dbReference type="NCBI Taxonomy" id="177439"/>
    <lineage>
        <taxon>Bacteria</taxon>
        <taxon>Pseudomonadati</taxon>
        <taxon>Thermodesulfobacteriota</taxon>
        <taxon>Desulfobulbia</taxon>
        <taxon>Desulfobulbales</taxon>
        <taxon>Desulfocapsaceae</taxon>
        <taxon>Desulfotalea</taxon>
    </lineage>
</organism>
<name>RL10_DESPS</name>
<comment type="function">
    <text evidence="1">Forms part of the ribosomal stalk, playing a central role in the interaction of the ribosome with GTP-bound translation factors.</text>
</comment>
<comment type="subunit">
    <text evidence="1">Part of the ribosomal stalk of the 50S ribosomal subunit. The N-terminus interacts with L11 and the large rRNA to form the base of the stalk. The C-terminus forms an elongated spine to which L12 dimers bind in a sequential fashion forming a multimeric L10(L12)X complex.</text>
</comment>
<comment type="similarity">
    <text evidence="1">Belongs to the universal ribosomal protein uL10 family.</text>
</comment>
<protein>
    <recommendedName>
        <fullName evidence="1">Large ribosomal subunit protein uL10</fullName>
    </recommendedName>
    <alternativeName>
        <fullName evidence="2">50S ribosomal protein L10</fullName>
    </alternativeName>
</protein>
<proteinExistence type="inferred from homology"/>
<dbReference type="EMBL" id="CR522870">
    <property type="protein sequence ID" value="CAG35844.1"/>
    <property type="molecule type" value="Genomic_DNA"/>
</dbReference>
<dbReference type="RefSeq" id="WP_011188358.1">
    <property type="nucleotide sequence ID" value="NC_006138.1"/>
</dbReference>
<dbReference type="SMR" id="Q6AP80"/>
<dbReference type="STRING" id="177439.DP1115"/>
<dbReference type="KEGG" id="dps:DP1115"/>
<dbReference type="eggNOG" id="COG0244">
    <property type="taxonomic scope" value="Bacteria"/>
</dbReference>
<dbReference type="HOGENOM" id="CLU_092227_0_0_7"/>
<dbReference type="OrthoDB" id="3186107at2"/>
<dbReference type="Proteomes" id="UP000000602">
    <property type="component" value="Chromosome"/>
</dbReference>
<dbReference type="GO" id="GO:1990904">
    <property type="term" value="C:ribonucleoprotein complex"/>
    <property type="evidence" value="ECO:0007669"/>
    <property type="project" value="UniProtKB-KW"/>
</dbReference>
<dbReference type="GO" id="GO:0005840">
    <property type="term" value="C:ribosome"/>
    <property type="evidence" value="ECO:0007669"/>
    <property type="project" value="UniProtKB-KW"/>
</dbReference>
<dbReference type="GO" id="GO:0070180">
    <property type="term" value="F:large ribosomal subunit rRNA binding"/>
    <property type="evidence" value="ECO:0007669"/>
    <property type="project" value="UniProtKB-UniRule"/>
</dbReference>
<dbReference type="GO" id="GO:0006412">
    <property type="term" value="P:translation"/>
    <property type="evidence" value="ECO:0007669"/>
    <property type="project" value="UniProtKB-UniRule"/>
</dbReference>
<dbReference type="CDD" id="cd05797">
    <property type="entry name" value="Ribosomal_L10"/>
    <property type="match status" value="1"/>
</dbReference>
<dbReference type="Gene3D" id="3.30.70.1730">
    <property type="match status" value="1"/>
</dbReference>
<dbReference type="Gene3D" id="6.10.250.290">
    <property type="match status" value="1"/>
</dbReference>
<dbReference type="HAMAP" id="MF_00362">
    <property type="entry name" value="Ribosomal_uL10"/>
    <property type="match status" value="1"/>
</dbReference>
<dbReference type="InterPro" id="IPR001790">
    <property type="entry name" value="Ribosomal_uL10"/>
</dbReference>
<dbReference type="InterPro" id="IPR043141">
    <property type="entry name" value="Ribosomal_uL10-like_sf"/>
</dbReference>
<dbReference type="InterPro" id="IPR022973">
    <property type="entry name" value="Ribosomal_uL10_bac"/>
</dbReference>
<dbReference type="InterPro" id="IPR047865">
    <property type="entry name" value="Ribosomal_uL10_bac_type"/>
</dbReference>
<dbReference type="NCBIfam" id="NF000955">
    <property type="entry name" value="PRK00099.1-1"/>
    <property type="match status" value="1"/>
</dbReference>
<dbReference type="PANTHER" id="PTHR11560">
    <property type="entry name" value="39S RIBOSOMAL PROTEIN L10, MITOCHONDRIAL"/>
    <property type="match status" value="1"/>
</dbReference>
<dbReference type="Pfam" id="PF00466">
    <property type="entry name" value="Ribosomal_L10"/>
    <property type="match status" value="1"/>
</dbReference>
<dbReference type="SUPFAM" id="SSF160369">
    <property type="entry name" value="Ribosomal protein L10-like"/>
    <property type="match status" value="1"/>
</dbReference>
<feature type="chain" id="PRO_0000154625" description="Large ribosomal subunit protein uL10">
    <location>
        <begin position="1"/>
        <end position="175"/>
    </location>
</feature>
<evidence type="ECO:0000255" key="1">
    <source>
        <dbReference type="HAMAP-Rule" id="MF_00362"/>
    </source>
</evidence>
<evidence type="ECO:0000305" key="2"/>
<reference key="1">
    <citation type="journal article" date="2004" name="Environ. Microbiol.">
        <title>The genome of Desulfotalea psychrophila, a sulfate-reducing bacterium from permanently cold Arctic sediments.</title>
        <authorList>
            <person name="Rabus R."/>
            <person name="Ruepp A."/>
            <person name="Frickey T."/>
            <person name="Rattei T."/>
            <person name="Fartmann B."/>
            <person name="Stark M."/>
            <person name="Bauer M."/>
            <person name="Zibat A."/>
            <person name="Lombardot T."/>
            <person name="Becker I."/>
            <person name="Amann J."/>
            <person name="Gellner K."/>
            <person name="Teeling H."/>
            <person name="Leuschner W.D."/>
            <person name="Gloeckner F.-O."/>
            <person name="Lupas A.N."/>
            <person name="Amann R."/>
            <person name="Klenk H.-P."/>
        </authorList>
    </citation>
    <scope>NUCLEOTIDE SEQUENCE [LARGE SCALE GENOMIC DNA]</scope>
    <source>
        <strain>DSM 12343 / LSv54</strain>
    </source>
</reference>
<accession>Q6AP80</accession>
<gene>
    <name evidence="1" type="primary">rplJ</name>
    <name type="ordered locus">DP1115</name>
</gene>
<sequence length="175" mass="18816">MNRDDKAALVSQLNDSFGRAKLSVVADYCGLKVSELQQIRIELKGCDSEIRVAKNTLLKRAADGTGTAVLADDFTGTTAVITSYSDPVGPAKVLTQFAGGHEKFVIRSAALEGEKIGVDRLEALAKLPSREVLLGQLLSTWNNVPTGLVRVLSGVPRTFVYGLQALKDQKEQEGK</sequence>